<comment type="function">
    <text evidence="1 6">Adapter required to activate the JNK and NF-kappa-B signaling pathways through the specific recognition of 'Lys-63'-linked polyubiquitin chains by its RanBP2-type zinc finger (NZF). Acts as an adapter linking MAP3K7/TAK1 and TRAF6 to 'Lys-63'-linked polyubiquitin chains. The RanBP2-type zinc finger (NZF) specifically recognizes Lys-63'-linked polyubiquitin chains unanchored or anchored to the substrate proteins such as RIPK1/RIP1 and RIPK2: this acts as a scaffold to organize a large signaling complex to promote autophosphorylation of MAP3K7/TAK1, and subsequent activation of I-kappa-B-kinase (IKK) core complex by MAP3K7/TAK1 (By similarity). Also recognizes and binds Lys-63'-linked polyubiquitin chains of heterotypic 'Lys-63'-/'Lys-48'-linked branched ubiquitin chains (By similarity). Involved in heart development (PubMed:20493459).</text>
</comment>
<comment type="subcellular location">
    <subcellularLocation>
        <location evidence="1">Membrane</location>
        <topology evidence="1">Peripheral membrane protein</topology>
    </subcellularLocation>
    <subcellularLocation>
        <location evidence="1">Cytoplasm</location>
        <location evidence="1">Cytosol</location>
    </subcellularLocation>
    <text evidence="1">Following IL1 stimulation, translocation occurs from the membrane to cytosol.</text>
</comment>
<comment type="alternative products">
    <event type="alternative splicing"/>
    <isoform>
        <id>Q5RFW2-1</id>
        <name>1</name>
        <sequence type="displayed"/>
    </isoform>
    <isoform>
        <id>Q5RFW2-2</id>
        <name>2</name>
        <sequence type="described" ref="VSP_019573 VSP_019574"/>
    </isoform>
</comment>
<comment type="domain">
    <text evidence="1">The RanBP2-type zinc finger (NZF) mediates binding to two consecutive 'Lys-63'-linked ubiquitins.</text>
</comment>
<proteinExistence type="evidence at protein level"/>
<name>TAB2_DANRE</name>
<protein>
    <recommendedName>
        <fullName>TGF-beta-activated kinase 1 and MAP3K7-binding protein 2</fullName>
    </recommendedName>
    <alternativeName>
        <fullName>Mitogen-activated protein kinase kinase kinase 7-interacting protein 2</fullName>
    </alternativeName>
    <alternativeName>
        <fullName>TGF-beta-activated kinase 1-binding protein 2</fullName>
    </alternativeName>
</protein>
<keyword id="KW-0025">Alternative splicing</keyword>
<keyword id="KW-0175">Coiled coil</keyword>
<keyword id="KW-0963">Cytoplasm</keyword>
<keyword id="KW-0472">Membrane</keyword>
<keyword id="KW-0479">Metal-binding</keyword>
<keyword id="KW-1185">Reference proteome</keyword>
<keyword id="KW-0862">Zinc</keyword>
<keyword id="KW-0863">Zinc-finger</keyword>
<dbReference type="EMBL" id="CR536610">
    <property type="protein sequence ID" value="CAI11747.1"/>
    <property type="molecule type" value="Genomic_DNA"/>
</dbReference>
<dbReference type="EMBL" id="CR536610">
    <property type="protein sequence ID" value="CAI11748.1"/>
    <property type="molecule type" value="Genomic_DNA"/>
</dbReference>
<dbReference type="EMBL" id="BC065982">
    <property type="protein sequence ID" value="AAH65982.1"/>
    <property type="molecule type" value="mRNA"/>
</dbReference>
<dbReference type="RefSeq" id="NP_001303622.1">
    <molecule id="Q5RFW2-1"/>
    <property type="nucleotide sequence ID" value="NM_001316693.1"/>
</dbReference>
<dbReference type="FunCoup" id="Q5RFW2">
    <property type="interactions" value="1770"/>
</dbReference>
<dbReference type="STRING" id="7955.ENSDARP00000019647"/>
<dbReference type="PaxDb" id="7955-ENSDARP00000019647"/>
<dbReference type="DNASU" id="494163"/>
<dbReference type="Ensembl" id="ENSDART00000017791">
    <molecule id="Q5RFW2-1"/>
    <property type="protein sequence ID" value="ENSDARP00000019647"/>
    <property type="gene ID" value="ENSDARG00000021509"/>
</dbReference>
<dbReference type="GeneID" id="494163"/>
<dbReference type="KEGG" id="dre:494163"/>
<dbReference type="AGR" id="ZFIN:ZDB-GENE-040426-933"/>
<dbReference type="CTD" id="23118"/>
<dbReference type="ZFIN" id="ZDB-GENE-040426-933">
    <property type="gene designation" value="tab2"/>
</dbReference>
<dbReference type="eggNOG" id="ENOG502QRAY">
    <property type="taxonomic scope" value="Eukaryota"/>
</dbReference>
<dbReference type="HOGENOM" id="CLU_025065_0_0_1"/>
<dbReference type="InParanoid" id="Q5RFW2"/>
<dbReference type="OMA" id="GPTFIHH"/>
<dbReference type="OrthoDB" id="6288762at2759"/>
<dbReference type="PhylomeDB" id="Q5RFW2"/>
<dbReference type="TreeFam" id="TF332021"/>
<dbReference type="PRO" id="PR:Q5RFW2"/>
<dbReference type="Proteomes" id="UP000000437">
    <property type="component" value="Chromosome 20"/>
</dbReference>
<dbReference type="Bgee" id="ENSDARG00000021509">
    <property type="expression patterns" value="Expressed in muscle tissue and 33 other cell types or tissues"/>
</dbReference>
<dbReference type="ExpressionAtlas" id="Q5RFW2">
    <property type="expression patterns" value="baseline and differential"/>
</dbReference>
<dbReference type="GO" id="GO:0005829">
    <property type="term" value="C:cytosol"/>
    <property type="evidence" value="ECO:0007669"/>
    <property type="project" value="UniProtKB-SubCell"/>
</dbReference>
<dbReference type="GO" id="GO:0016020">
    <property type="term" value="C:membrane"/>
    <property type="evidence" value="ECO:0007669"/>
    <property type="project" value="UniProtKB-SubCell"/>
</dbReference>
<dbReference type="GO" id="GO:0070530">
    <property type="term" value="F:K63-linked polyubiquitin modification-dependent protein binding"/>
    <property type="evidence" value="ECO:0000250"/>
    <property type="project" value="UniProtKB"/>
</dbReference>
<dbReference type="GO" id="GO:0043130">
    <property type="term" value="F:ubiquitin binding"/>
    <property type="evidence" value="ECO:0007669"/>
    <property type="project" value="InterPro"/>
</dbReference>
<dbReference type="GO" id="GO:0008270">
    <property type="term" value="F:zinc ion binding"/>
    <property type="evidence" value="ECO:0000250"/>
    <property type="project" value="UniProtKB"/>
</dbReference>
<dbReference type="GO" id="GO:0043009">
    <property type="term" value="P:chordate embryonic development"/>
    <property type="evidence" value="ECO:0000315"/>
    <property type="project" value="ZFIN"/>
</dbReference>
<dbReference type="GO" id="GO:0060027">
    <property type="term" value="P:convergent extension involved in gastrulation"/>
    <property type="evidence" value="ECO:0000315"/>
    <property type="project" value="ZFIN"/>
</dbReference>
<dbReference type="GO" id="GO:0007507">
    <property type="term" value="P:heart development"/>
    <property type="evidence" value="ECO:0000315"/>
    <property type="project" value="UniProtKB"/>
</dbReference>
<dbReference type="GO" id="GO:0043123">
    <property type="term" value="P:positive regulation of canonical NF-kappaB signal transduction"/>
    <property type="evidence" value="ECO:0000250"/>
    <property type="project" value="UniProtKB"/>
</dbReference>
<dbReference type="CDD" id="cd14362">
    <property type="entry name" value="CUE_TAB2_TAB3"/>
    <property type="match status" value="1"/>
</dbReference>
<dbReference type="Gene3D" id="1.10.8.10">
    <property type="entry name" value="DNA helicase RuvA subunit, C-terminal domain"/>
    <property type="match status" value="1"/>
</dbReference>
<dbReference type="Gene3D" id="2.30.30.380">
    <property type="entry name" value="Zn-finger domain of Sec23/24"/>
    <property type="match status" value="1"/>
</dbReference>
<dbReference type="InterPro" id="IPR003892">
    <property type="entry name" value="CUE"/>
</dbReference>
<dbReference type="InterPro" id="IPR041911">
    <property type="entry name" value="TAB2/3_CUE"/>
</dbReference>
<dbReference type="InterPro" id="IPR001876">
    <property type="entry name" value="Znf_RanBP2"/>
</dbReference>
<dbReference type="InterPro" id="IPR036443">
    <property type="entry name" value="Znf_RanBP2_sf"/>
</dbReference>
<dbReference type="PANTHER" id="PTHR46253:SF2">
    <property type="entry name" value="TGF-BETA-ACTIVATED KINASE 1 AND MAP3K7-BINDING PROTEIN 2"/>
    <property type="match status" value="1"/>
</dbReference>
<dbReference type="PANTHER" id="PTHR46253">
    <property type="entry name" value="TGF-BETA-ACTIVATED KINASE 1 AND MAP3K7-BINDING PROTEIN TAB"/>
    <property type="match status" value="1"/>
</dbReference>
<dbReference type="Pfam" id="PF02845">
    <property type="entry name" value="CUE"/>
    <property type="match status" value="1"/>
</dbReference>
<dbReference type="SMART" id="SM00546">
    <property type="entry name" value="CUE"/>
    <property type="match status" value="1"/>
</dbReference>
<dbReference type="SMART" id="SM00547">
    <property type="entry name" value="ZnF_RBZ"/>
    <property type="match status" value="1"/>
</dbReference>
<dbReference type="SUPFAM" id="SSF90209">
    <property type="entry name" value="Ran binding protein zinc finger-like"/>
    <property type="match status" value="1"/>
</dbReference>
<dbReference type="PROSITE" id="PS51140">
    <property type="entry name" value="CUE"/>
    <property type="match status" value="1"/>
</dbReference>
<dbReference type="PROSITE" id="PS01358">
    <property type="entry name" value="ZF_RANBP2_1"/>
    <property type="match status" value="1"/>
</dbReference>
<dbReference type="PROSITE" id="PS50199">
    <property type="entry name" value="ZF_RANBP2_2"/>
    <property type="match status" value="1"/>
</dbReference>
<accession>Q5RFW2</accession>
<accession>Q6NZS9</accession>
<organism>
    <name type="scientific">Danio rerio</name>
    <name type="common">Zebrafish</name>
    <name type="synonym">Brachydanio rerio</name>
    <dbReference type="NCBI Taxonomy" id="7955"/>
    <lineage>
        <taxon>Eukaryota</taxon>
        <taxon>Metazoa</taxon>
        <taxon>Chordata</taxon>
        <taxon>Craniata</taxon>
        <taxon>Vertebrata</taxon>
        <taxon>Euteleostomi</taxon>
        <taxon>Actinopterygii</taxon>
        <taxon>Neopterygii</taxon>
        <taxon>Teleostei</taxon>
        <taxon>Ostariophysi</taxon>
        <taxon>Cypriniformes</taxon>
        <taxon>Danionidae</taxon>
        <taxon>Danioninae</taxon>
        <taxon>Danio</taxon>
    </lineage>
</organism>
<reference key="1">
    <citation type="journal article" date="2013" name="Nature">
        <title>The zebrafish reference genome sequence and its relationship to the human genome.</title>
        <authorList>
            <person name="Howe K."/>
            <person name="Clark M.D."/>
            <person name="Torroja C.F."/>
            <person name="Torrance J."/>
            <person name="Berthelot C."/>
            <person name="Muffato M."/>
            <person name="Collins J.E."/>
            <person name="Humphray S."/>
            <person name="McLaren K."/>
            <person name="Matthews L."/>
            <person name="McLaren S."/>
            <person name="Sealy I."/>
            <person name="Caccamo M."/>
            <person name="Churcher C."/>
            <person name="Scott C."/>
            <person name="Barrett J.C."/>
            <person name="Koch R."/>
            <person name="Rauch G.J."/>
            <person name="White S."/>
            <person name="Chow W."/>
            <person name="Kilian B."/>
            <person name="Quintais L.T."/>
            <person name="Guerra-Assuncao J.A."/>
            <person name="Zhou Y."/>
            <person name="Gu Y."/>
            <person name="Yen J."/>
            <person name="Vogel J.H."/>
            <person name="Eyre T."/>
            <person name="Redmond S."/>
            <person name="Banerjee R."/>
            <person name="Chi J."/>
            <person name="Fu B."/>
            <person name="Langley E."/>
            <person name="Maguire S.F."/>
            <person name="Laird G.K."/>
            <person name="Lloyd D."/>
            <person name="Kenyon E."/>
            <person name="Donaldson S."/>
            <person name="Sehra H."/>
            <person name="Almeida-King J."/>
            <person name="Loveland J."/>
            <person name="Trevanion S."/>
            <person name="Jones M."/>
            <person name="Quail M."/>
            <person name="Willey D."/>
            <person name="Hunt A."/>
            <person name="Burton J."/>
            <person name="Sims S."/>
            <person name="McLay K."/>
            <person name="Plumb B."/>
            <person name="Davis J."/>
            <person name="Clee C."/>
            <person name="Oliver K."/>
            <person name="Clark R."/>
            <person name="Riddle C."/>
            <person name="Elliot D."/>
            <person name="Threadgold G."/>
            <person name="Harden G."/>
            <person name="Ware D."/>
            <person name="Begum S."/>
            <person name="Mortimore B."/>
            <person name="Kerry G."/>
            <person name="Heath P."/>
            <person name="Phillimore B."/>
            <person name="Tracey A."/>
            <person name="Corby N."/>
            <person name="Dunn M."/>
            <person name="Johnson C."/>
            <person name="Wood J."/>
            <person name="Clark S."/>
            <person name="Pelan S."/>
            <person name="Griffiths G."/>
            <person name="Smith M."/>
            <person name="Glithero R."/>
            <person name="Howden P."/>
            <person name="Barker N."/>
            <person name="Lloyd C."/>
            <person name="Stevens C."/>
            <person name="Harley J."/>
            <person name="Holt K."/>
            <person name="Panagiotidis G."/>
            <person name="Lovell J."/>
            <person name="Beasley H."/>
            <person name="Henderson C."/>
            <person name="Gordon D."/>
            <person name="Auger K."/>
            <person name="Wright D."/>
            <person name="Collins J."/>
            <person name="Raisen C."/>
            <person name="Dyer L."/>
            <person name="Leung K."/>
            <person name="Robertson L."/>
            <person name="Ambridge K."/>
            <person name="Leongamornlert D."/>
            <person name="McGuire S."/>
            <person name="Gilderthorp R."/>
            <person name="Griffiths C."/>
            <person name="Manthravadi D."/>
            <person name="Nichol S."/>
            <person name="Barker G."/>
            <person name="Whitehead S."/>
            <person name="Kay M."/>
            <person name="Brown J."/>
            <person name="Murnane C."/>
            <person name="Gray E."/>
            <person name="Humphries M."/>
            <person name="Sycamore N."/>
            <person name="Barker D."/>
            <person name="Saunders D."/>
            <person name="Wallis J."/>
            <person name="Babbage A."/>
            <person name="Hammond S."/>
            <person name="Mashreghi-Mohammadi M."/>
            <person name="Barr L."/>
            <person name="Martin S."/>
            <person name="Wray P."/>
            <person name="Ellington A."/>
            <person name="Matthews N."/>
            <person name="Ellwood M."/>
            <person name="Woodmansey R."/>
            <person name="Clark G."/>
            <person name="Cooper J."/>
            <person name="Tromans A."/>
            <person name="Grafham D."/>
            <person name="Skuce C."/>
            <person name="Pandian R."/>
            <person name="Andrews R."/>
            <person name="Harrison E."/>
            <person name="Kimberley A."/>
            <person name="Garnett J."/>
            <person name="Fosker N."/>
            <person name="Hall R."/>
            <person name="Garner P."/>
            <person name="Kelly D."/>
            <person name="Bird C."/>
            <person name="Palmer S."/>
            <person name="Gehring I."/>
            <person name="Berger A."/>
            <person name="Dooley C.M."/>
            <person name="Ersan-Urun Z."/>
            <person name="Eser C."/>
            <person name="Geiger H."/>
            <person name="Geisler M."/>
            <person name="Karotki L."/>
            <person name="Kirn A."/>
            <person name="Konantz J."/>
            <person name="Konantz M."/>
            <person name="Oberlander M."/>
            <person name="Rudolph-Geiger S."/>
            <person name="Teucke M."/>
            <person name="Lanz C."/>
            <person name="Raddatz G."/>
            <person name="Osoegawa K."/>
            <person name="Zhu B."/>
            <person name="Rapp A."/>
            <person name="Widaa S."/>
            <person name="Langford C."/>
            <person name="Yang F."/>
            <person name="Schuster S.C."/>
            <person name="Carter N.P."/>
            <person name="Harrow J."/>
            <person name="Ning Z."/>
            <person name="Herrero J."/>
            <person name="Searle S.M."/>
            <person name="Enright A."/>
            <person name="Geisler R."/>
            <person name="Plasterk R.H."/>
            <person name="Lee C."/>
            <person name="Westerfield M."/>
            <person name="de Jong P.J."/>
            <person name="Zon L.I."/>
            <person name="Postlethwait J.H."/>
            <person name="Nusslein-Volhard C."/>
            <person name="Hubbard T.J."/>
            <person name="Roest Crollius H."/>
            <person name="Rogers J."/>
            <person name="Stemple D.L."/>
        </authorList>
    </citation>
    <scope>NUCLEOTIDE SEQUENCE [LARGE SCALE GENOMIC DNA]</scope>
    <source>
        <strain>Tuebingen</strain>
    </source>
</reference>
<reference key="2">
    <citation type="submission" date="2004-02" db="EMBL/GenBank/DDBJ databases">
        <authorList>
            <consortium name="NIH - Zebrafish Gene Collection (ZGC) project"/>
        </authorList>
    </citation>
    <scope>NUCLEOTIDE SEQUENCE [LARGE SCALE MRNA] (ISOFORM 2)</scope>
    <source>
        <tissue>Embryo</tissue>
    </source>
</reference>
<reference key="3">
    <citation type="journal article" date="2010" name="Am. J. Hum. Genet.">
        <title>Haploinsufficiency of TAB2 causes congenital heart defects in humans.</title>
        <authorList>
            <person name="Thienpont B."/>
            <person name="Zhang L."/>
            <person name="Postma A.V."/>
            <person name="Breckpot J."/>
            <person name="Tranchevent L.C."/>
            <person name="Van Loo P."/>
            <person name="Mollgard K."/>
            <person name="Tommerup N."/>
            <person name="Bache I."/>
            <person name="Tumer Z."/>
            <person name="van Engelen K."/>
            <person name="Menten B."/>
            <person name="Mortier G."/>
            <person name="Waggoner D."/>
            <person name="Gewillig M."/>
            <person name="Moreau Y."/>
            <person name="Devriendt K."/>
            <person name="Larsen L.A."/>
        </authorList>
    </citation>
    <scope>FUNCTION IN HEART DEVELOPMENT</scope>
</reference>
<sequence length="711" mass="76880">MAQGNQQIDNQVLHHLRQKFPEVPEDVVCECVLQNKSDLAACCEYLTKVSPRFLYSEGSQSLTDLRNHMTQLNLGVSQNTHGAVQRDAVGMNGSRTLAPSVSDGPLNVPSALSEFYQPETPSVPTHTPASLSMESTRKPQPPQHLGLYQVGGKGHAPPQAPRFNPITVTLAPNTGRNTPTSLHIHGGPQSGLNSPNSIYIRPYVTQPGSTRQVQCRAQYSPTSQPAQQIYQITHPAAPQSSWSQHQTSHVYMPISSPTNTQAPSIPSAVASQAVSSSPLPSSGSSFSQYNIQNISTGPRKNQIEIKLESPQRGSGSSSLLRSSSAPRSACSSTSSSCPSSCTSLASSSGSSTPISIGGAGLSRSQPTVYISPSPPTAATAPSEDCALVPNTPRSQPKIYFSANTSADDGGGRNPPTVYISANPALQGPAGLRALGSQMSMGPAYIHHHPPKSRPSVGAGGTATSPRVVVTQPNTKYTFKITVSPNKPPSVSPGVVSPTFEPNNMLSLPADHHYAEPEISQPDPMRDKAVEPRRLSMGADDAAYTQALLVHQRARMERLWHELELKKRKLEKLKEEVNEMESDLTRRRLQRSNAFCQIPSIEEMQQLRCKNRLLQIDIDCLTKEIDLLQTRGPDFNPIAIHNFYDNLGFLGPVPPKPLKGPTKAEVSRTDAGVRVLSEPEEDDGVQWSCTACTFLNHPALNRCEECEFPRNF</sequence>
<evidence type="ECO:0000250" key="1">
    <source>
        <dbReference type="UniProtKB" id="Q9NYJ8"/>
    </source>
</evidence>
<evidence type="ECO:0000255" key="2"/>
<evidence type="ECO:0000255" key="3">
    <source>
        <dbReference type="PROSITE-ProRule" id="PRU00322"/>
    </source>
</evidence>
<evidence type="ECO:0000255" key="4">
    <source>
        <dbReference type="PROSITE-ProRule" id="PRU00468"/>
    </source>
</evidence>
<evidence type="ECO:0000256" key="5">
    <source>
        <dbReference type="SAM" id="MobiDB-lite"/>
    </source>
</evidence>
<evidence type="ECO:0000269" key="6">
    <source>
    </source>
</evidence>
<evidence type="ECO:0000303" key="7">
    <source ref="2"/>
</evidence>
<gene>
    <name type="primary">tab2</name>
    <name type="synonym">map3k7ip2</name>
    <name type="ORF">zgc:77446</name>
</gene>
<feature type="chain" id="PRO_0000225698" description="TGF-beta-activated kinase 1 and MAP3K7-binding protein 2">
    <location>
        <begin position="1"/>
        <end position="711"/>
    </location>
</feature>
<feature type="domain" description="CUE" evidence="4">
    <location>
        <begin position="8"/>
        <end position="51"/>
    </location>
</feature>
<feature type="zinc finger region" description="RanBP2-type" evidence="3">
    <location>
        <begin position="681"/>
        <end position="711"/>
    </location>
</feature>
<feature type="region of interest" description="Disordered" evidence="5">
    <location>
        <begin position="118"/>
        <end position="142"/>
    </location>
</feature>
<feature type="region of interest" description="Disordered" evidence="5">
    <location>
        <begin position="252"/>
        <end position="414"/>
    </location>
</feature>
<feature type="coiled-coil region" evidence="2">
    <location>
        <begin position="550"/>
        <end position="630"/>
    </location>
</feature>
<feature type="compositionally biased region" description="Polar residues" evidence="5">
    <location>
        <begin position="119"/>
        <end position="134"/>
    </location>
</feature>
<feature type="compositionally biased region" description="Polar residues" evidence="5">
    <location>
        <begin position="252"/>
        <end position="261"/>
    </location>
</feature>
<feature type="compositionally biased region" description="Low complexity" evidence="5">
    <location>
        <begin position="262"/>
        <end position="287"/>
    </location>
</feature>
<feature type="compositionally biased region" description="Polar residues" evidence="5">
    <location>
        <begin position="288"/>
        <end position="299"/>
    </location>
</feature>
<feature type="compositionally biased region" description="Low complexity" evidence="5">
    <location>
        <begin position="312"/>
        <end position="353"/>
    </location>
</feature>
<feature type="splice variant" id="VSP_019573" description="In isoform 2." evidence="7">
    <original>QAPSIPSAVASQAVSSSPLPSSGSS</original>
    <variation>HTHTRFTCVCARVRMPVCLIHGNGR</variation>
    <location>
        <begin position="261"/>
        <end position="285"/>
    </location>
</feature>
<feature type="splice variant" id="VSP_019574" description="In isoform 2." evidence="7">
    <location>
        <begin position="286"/>
        <end position="711"/>
    </location>
</feature>